<gene>
    <name evidence="1" type="primary">miaA</name>
    <name type="ordered locus">Synpcc7942_2490</name>
    <name type="ORF">sea0036</name>
</gene>
<proteinExistence type="inferred from homology"/>
<feature type="chain" id="PRO_0000163994" description="tRNA dimethylallyltransferase">
    <location>
        <begin position="1"/>
        <end position="306"/>
    </location>
</feature>
<feature type="region of interest" description="Interaction with substrate tRNA" evidence="1">
    <location>
        <begin position="39"/>
        <end position="42"/>
    </location>
</feature>
<feature type="binding site" evidence="1">
    <location>
        <begin position="14"/>
        <end position="21"/>
    </location>
    <ligand>
        <name>ATP</name>
        <dbReference type="ChEBI" id="CHEBI:30616"/>
    </ligand>
</feature>
<feature type="binding site" evidence="1">
    <location>
        <begin position="16"/>
        <end position="21"/>
    </location>
    <ligand>
        <name>substrate</name>
    </ligand>
</feature>
<feature type="site" description="Interaction with substrate tRNA" evidence="1">
    <location>
        <position position="105"/>
    </location>
</feature>
<evidence type="ECO:0000255" key="1">
    <source>
        <dbReference type="HAMAP-Rule" id="MF_00185"/>
    </source>
</evidence>
<organism>
    <name type="scientific">Synechococcus elongatus (strain ATCC 33912 / PCC 7942 / FACHB-805)</name>
    <name type="common">Anacystis nidulans R2</name>
    <dbReference type="NCBI Taxonomy" id="1140"/>
    <lineage>
        <taxon>Bacteria</taxon>
        <taxon>Bacillati</taxon>
        <taxon>Cyanobacteriota</taxon>
        <taxon>Cyanophyceae</taxon>
        <taxon>Synechococcales</taxon>
        <taxon>Synechococcaceae</taxon>
        <taxon>Synechococcus</taxon>
    </lineage>
</organism>
<dbReference type="EC" id="2.5.1.75" evidence="1"/>
<dbReference type="EMBL" id="U30252">
    <property type="protein sequence ID" value="AAN71774.1"/>
    <property type="molecule type" value="Genomic_DNA"/>
</dbReference>
<dbReference type="EMBL" id="CP000100">
    <property type="protein sequence ID" value="ABB58520.1"/>
    <property type="molecule type" value="Genomic_DNA"/>
</dbReference>
<dbReference type="RefSeq" id="WP_011378489.1">
    <property type="nucleotide sequence ID" value="NZ_JACJTX010000001.1"/>
</dbReference>
<dbReference type="SMR" id="Q8GIT6"/>
<dbReference type="STRING" id="1140.Synpcc7942_2490"/>
<dbReference type="PaxDb" id="1140-Synpcc7942_2490"/>
<dbReference type="GeneID" id="72431380"/>
<dbReference type="KEGG" id="syf:Synpcc7942_2490"/>
<dbReference type="eggNOG" id="COG0324">
    <property type="taxonomic scope" value="Bacteria"/>
</dbReference>
<dbReference type="HOGENOM" id="CLU_032616_0_1_3"/>
<dbReference type="OrthoDB" id="9776390at2"/>
<dbReference type="BioCyc" id="SYNEL:SYNPCC7942_2490-MONOMER"/>
<dbReference type="Proteomes" id="UP000889800">
    <property type="component" value="Chromosome"/>
</dbReference>
<dbReference type="GO" id="GO:0005524">
    <property type="term" value="F:ATP binding"/>
    <property type="evidence" value="ECO:0007669"/>
    <property type="project" value="UniProtKB-UniRule"/>
</dbReference>
<dbReference type="GO" id="GO:0052381">
    <property type="term" value="F:tRNA dimethylallyltransferase activity"/>
    <property type="evidence" value="ECO:0007669"/>
    <property type="project" value="UniProtKB-UniRule"/>
</dbReference>
<dbReference type="GO" id="GO:0006400">
    <property type="term" value="P:tRNA modification"/>
    <property type="evidence" value="ECO:0007669"/>
    <property type="project" value="TreeGrafter"/>
</dbReference>
<dbReference type="Gene3D" id="1.10.20.140">
    <property type="match status" value="1"/>
</dbReference>
<dbReference type="Gene3D" id="3.40.50.300">
    <property type="entry name" value="P-loop containing nucleotide triphosphate hydrolases"/>
    <property type="match status" value="1"/>
</dbReference>
<dbReference type="HAMAP" id="MF_00185">
    <property type="entry name" value="IPP_trans"/>
    <property type="match status" value="1"/>
</dbReference>
<dbReference type="InterPro" id="IPR039657">
    <property type="entry name" value="Dimethylallyltransferase"/>
</dbReference>
<dbReference type="InterPro" id="IPR018022">
    <property type="entry name" value="IPT"/>
</dbReference>
<dbReference type="InterPro" id="IPR027417">
    <property type="entry name" value="P-loop_NTPase"/>
</dbReference>
<dbReference type="NCBIfam" id="TIGR00174">
    <property type="entry name" value="miaA"/>
    <property type="match status" value="1"/>
</dbReference>
<dbReference type="PANTHER" id="PTHR11088">
    <property type="entry name" value="TRNA DIMETHYLALLYLTRANSFERASE"/>
    <property type="match status" value="1"/>
</dbReference>
<dbReference type="PANTHER" id="PTHR11088:SF60">
    <property type="entry name" value="TRNA DIMETHYLALLYLTRANSFERASE"/>
    <property type="match status" value="1"/>
</dbReference>
<dbReference type="Pfam" id="PF01715">
    <property type="entry name" value="IPPT"/>
    <property type="match status" value="1"/>
</dbReference>
<dbReference type="SUPFAM" id="SSF52540">
    <property type="entry name" value="P-loop containing nucleoside triphosphate hydrolases"/>
    <property type="match status" value="1"/>
</dbReference>
<reference key="1">
    <citation type="submission" date="2002-11" db="EMBL/GenBank/DDBJ databases">
        <title>Synechococcus elongatus PCC7942 genome sequence, cosmid 7H1 and 2E8.</title>
        <authorList>
            <person name="Holtman C.K."/>
            <person name="Socias T."/>
            <person name="Mohler B.J."/>
            <person name="Chen Y."/>
            <person name="Min H."/>
            <person name="Golden S.S."/>
            <person name="Youderian P."/>
            <person name="Sandoval P."/>
            <person name="Gonzalez A."/>
            <person name="Salinas I."/>
        </authorList>
    </citation>
    <scope>NUCLEOTIDE SEQUENCE [GENOMIC DNA]</scope>
</reference>
<reference key="2">
    <citation type="submission" date="2005-08" db="EMBL/GenBank/DDBJ databases">
        <title>Complete sequence of chromosome 1 of Synechococcus elongatus PCC 7942.</title>
        <authorList>
            <consortium name="US DOE Joint Genome Institute"/>
            <person name="Copeland A."/>
            <person name="Lucas S."/>
            <person name="Lapidus A."/>
            <person name="Barry K."/>
            <person name="Detter J.C."/>
            <person name="Glavina T."/>
            <person name="Hammon N."/>
            <person name="Israni S."/>
            <person name="Pitluck S."/>
            <person name="Schmutz J."/>
            <person name="Larimer F."/>
            <person name="Land M."/>
            <person name="Kyrpides N."/>
            <person name="Lykidis A."/>
            <person name="Golden S."/>
            <person name="Richardson P."/>
        </authorList>
    </citation>
    <scope>NUCLEOTIDE SEQUENCE [LARGE SCALE GENOMIC DNA]</scope>
    <source>
        <strain>ATCC 33912 / PCC 7942 / FACHB-805</strain>
    </source>
</reference>
<protein>
    <recommendedName>
        <fullName evidence="1">tRNA dimethylallyltransferase</fullName>
        <ecNumber evidence="1">2.5.1.75</ecNumber>
    </recommendedName>
    <alternativeName>
        <fullName evidence="1">Dimethylallyl diphosphate:tRNA dimethylallyltransferase</fullName>
        <shortName evidence="1">DMAPP:tRNA dimethylallyltransferase</shortName>
        <shortName evidence="1">DMATase</shortName>
    </alternativeName>
    <alternativeName>
        <fullName evidence="1">Isopentenyl-diphosphate:tRNA isopentenyltransferase</fullName>
        <shortName evidence="1">IPP transferase</shortName>
        <shortName evidence="1">IPPT</shortName>
        <shortName evidence="1">IPTase</shortName>
    </alternativeName>
</protein>
<sequence length="306" mass="34290">MESRLKPGLIVLCGPTAAGKSSLAIAIAQRLGSPILSADSRLVYRDFNIGTAKPTPAEQQQVPHYLMDLCDPRQVFTVGDYQDCAVPLIQQLQEKGMLPLLVGGTGLYIKAIVNGLRFPRIAPQPKLRSQLQALGQPLCHALLQRVDPVAGDRIHVNDRVRTLRALEVFYVSGDRLTDLQQEQPPSYPILQIGLDSDRLEARIQQRTQQMLTSGFVEEVQGLCDRYGSDLPLLNTLGYRQVCAFLQGSLSRSELPEQIVLQTRQYAKQQRTWFRADSSIQWIDAEASNRLERALDLIERFRKSEGV</sequence>
<comment type="function">
    <text evidence="1">Catalyzes the transfer of a dimethylallyl group onto the adenine at position 37 in tRNAs that read codons beginning with uridine, leading to the formation of N6-(dimethylallyl)adenosine (i(6)A).</text>
</comment>
<comment type="catalytic activity">
    <reaction evidence="1">
        <text>adenosine(37) in tRNA + dimethylallyl diphosphate = N(6)-dimethylallyladenosine(37) in tRNA + diphosphate</text>
        <dbReference type="Rhea" id="RHEA:26482"/>
        <dbReference type="Rhea" id="RHEA-COMP:10162"/>
        <dbReference type="Rhea" id="RHEA-COMP:10375"/>
        <dbReference type="ChEBI" id="CHEBI:33019"/>
        <dbReference type="ChEBI" id="CHEBI:57623"/>
        <dbReference type="ChEBI" id="CHEBI:74411"/>
        <dbReference type="ChEBI" id="CHEBI:74415"/>
        <dbReference type="EC" id="2.5.1.75"/>
    </reaction>
</comment>
<comment type="cofactor">
    <cofactor evidence="1">
        <name>Mg(2+)</name>
        <dbReference type="ChEBI" id="CHEBI:18420"/>
    </cofactor>
</comment>
<comment type="subunit">
    <text evidence="1">Monomer.</text>
</comment>
<comment type="similarity">
    <text evidence="1">Belongs to the IPP transferase family.</text>
</comment>
<keyword id="KW-0067">ATP-binding</keyword>
<keyword id="KW-0460">Magnesium</keyword>
<keyword id="KW-0547">Nucleotide-binding</keyword>
<keyword id="KW-1185">Reference proteome</keyword>
<keyword id="KW-0808">Transferase</keyword>
<keyword id="KW-0819">tRNA processing</keyword>
<accession>Q8GIT6</accession>
<accession>Q31K99</accession>
<name>MIAA_SYNE7</name>